<proteinExistence type="evidence at protein level"/>
<comment type="function">
    <text evidence="1">Important in the maintenance of hemostasis, it promotes adhesion of platelets to the sites of vascular injury by forming a molecular bridge between sub-endothelial collagen matrix and platelet-surface receptor complex, glycoprotein Ibalpha/IX/V. Also acts as a chaperone for coagulation factor VIII, delivering it to the site of injury, stabilizing its heterodimeric structure and protecting it from premature clearance from plasma (By similarity).</text>
</comment>
<comment type="subunit">
    <text evidence="8">Multimeric. Interacts with F8.</text>
</comment>
<comment type="subcellular location">
    <subcellularLocation>
        <location evidence="8">Secreted</location>
    </subcellularLocation>
    <subcellularLocation>
        <location evidence="8">Secreted</location>
        <location evidence="8">Extracellular space</location>
        <location evidence="8">Extracellular matrix</location>
    </subcellularLocation>
    <text>Localized to storage granules.</text>
</comment>
<comment type="tissue specificity">
    <text>Plasma.</text>
</comment>
<comment type="domain">
    <text>The propeptide is required for multimerization of vWF and for its targeting to storage granules.</text>
</comment>
<comment type="PTM">
    <text evidence="1">All cysteine residues are involved in intrachain or interchain disulfide bonds.</text>
</comment>
<comment type="PTM">
    <text evidence="1">N- and O-glycosylated.</text>
</comment>
<comment type="disease">
    <text evidence="7">Defects in VWF are the cause of von Willebrand disease (VWD) in the Scottish Terrier. VWD is characterized by frequent bleeding. Type I VWD is associated with a deficiency of VWF; type II by normal to decreased plasma level of VWF; type III by a virtual absence of VWF.</text>
</comment>
<dbReference type="EMBL" id="L76227">
    <property type="protein sequence ID" value="AAB05549.1"/>
    <property type="molecule type" value="mRNA"/>
</dbReference>
<dbReference type="EMBL" id="U66246">
    <property type="protein sequence ID" value="AAB93766.2"/>
    <property type="molecule type" value="mRNA"/>
</dbReference>
<dbReference type="EMBL" id="AF099154">
    <property type="protein sequence ID" value="AAD04919.1"/>
    <property type="molecule type" value="mRNA"/>
</dbReference>
<dbReference type="EMBL" id="L16903">
    <property type="protein sequence ID" value="AAA30903.1"/>
    <property type="molecule type" value="Genomic_DNA"/>
</dbReference>
<dbReference type="RefSeq" id="NP_001002932.1">
    <property type="nucleotide sequence ID" value="NM_001002932.1"/>
</dbReference>
<dbReference type="SMR" id="Q28295"/>
<dbReference type="FunCoup" id="Q28295">
    <property type="interactions" value="180"/>
</dbReference>
<dbReference type="STRING" id="9615.ENSCAFP00000053390"/>
<dbReference type="MEROPS" id="I08.950"/>
<dbReference type="MEROPS" id="I08.954"/>
<dbReference type="GlyCosmos" id="Q28295">
    <property type="glycosylation" value="15 sites, No reported glycans"/>
</dbReference>
<dbReference type="PaxDb" id="9612-ENSCAFP00000022453"/>
<dbReference type="Ensembl" id="ENSCAFT00000083915.2">
    <property type="protein sequence ID" value="ENSCAFP00000065165.2"/>
    <property type="gene ID" value="ENSCAFG00000015228.5"/>
</dbReference>
<dbReference type="GeneID" id="399544"/>
<dbReference type="KEGG" id="cfa:399544"/>
<dbReference type="CTD" id="7450"/>
<dbReference type="VGNC" id="VGNC:48329">
    <property type="gene designation" value="VWF"/>
</dbReference>
<dbReference type="eggNOG" id="KOG1216">
    <property type="taxonomic scope" value="Eukaryota"/>
</dbReference>
<dbReference type="InParanoid" id="Q28295"/>
<dbReference type="OrthoDB" id="296386at2759"/>
<dbReference type="Reactome" id="R-CFA-114608">
    <property type="pathway name" value="Platelet degranulation"/>
</dbReference>
<dbReference type="Reactome" id="R-CFA-216083">
    <property type="pathway name" value="Integrin cell surface interactions"/>
</dbReference>
<dbReference type="Reactome" id="R-CFA-354192">
    <property type="pathway name" value="Integrin signaling"/>
</dbReference>
<dbReference type="Reactome" id="R-CFA-354194">
    <property type="pathway name" value="GRB2:SOS provides linkage to MAPK signaling for Integrins"/>
</dbReference>
<dbReference type="Reactome" id="R-CFA-372708">
    <property type="pathway name" value="p130Cas linkage to MAPK signaling for integrins"/>
</dbReference>
<dbReference type="Reactome" id="R-CFA-430116">
    <property type="pathway name" value="GP1b-IX-V activation signalling"/>
</dbReference>
<dbReference type="Reactome" id="R-CFA-5674135">
    <property type="pathway name" value="MAP2K and MAPK activation"/>
</dbReference>
<dbReference type="Reactome" id="R-CFA-75892">
    <property type="pathway name" value="Platelet Adhesion to exposed collagen"/>
</dbReference>
<dbReference type="Proteomes" id="UP000002254">
    <property type="component" value="Chromosome 27"/>
</dbReference>
<dbReference type="Proteomes" id="UP000694429">
    <property type="component" value="Unplaced"/>
</dbReference>
<dbReference type="Proteomes" id="UP000694542">
    <property type="component" value="Unplaced"/>
</dbReference>
<dbReference type="Proteomes" id="UP000805418">
    <property type="component" value="Unplaced"/>
</dbReference>
<dbReference type="GO" id="GO:0062023">
    <property type="term" value="C:collagen-containing extracellular matrix"/>
    <property type="evidence" value="ECO:0000250"/>
    <property type="project" value="UniProtKB"/>
</dbReference>
<dbReference type="GO" id="GO:0005783">
    <property type="term" value="C:endoplasmic reticulum"/>
    <property type="evidence" value="ECO:0000250"/>
    <property type="project" value="UniProtKB"/>
</dbReference>
<dbReference type="GO" id="GO:0005576">
    <property type="term" value="C:extracellular region"/>
    <property type="evidence" value="ECO:0000250"/>
    <property type="project" value="UniProtKB"/>
</dbReference>
<dbReference type="GO" id="GO:0033093">
    <property type="term" value="C:Weibel-Palade body"/>
    <property type="evidence" value="ECO:0000250"/>
    <property type="project" value="UniProtKB"/>
</dbReference>
<dbReference type="GO" id="GO:0005518">
    <property type="term" value="F:collagen binding"/>
    <property type="evidence" value="ECO:0000250"/>
    <property type="project" value="UniProtKB"/>
</dbReference>
<dbReference type="GO" id="GO:0042802">
    <property type="term" value="F:identical protein binding"/>
    <property type="evidence" value="ECO:0000250"/>
    <property type="project" value="UniProtKB"/>
</dbReference>
<dbReference type="GO" id="GO:0019865">
    <property type="term" value="F:immunoglobulin binding"/>
    <property type="evidence" value="ECO:0000250"/>
    <property type="project" value="UniProtKB"/>
</dbReference>
<dbReference type="GO" id="GO:0005178">
    <property type="term" value="F:integrin binding"/>
    <property type="evidence" value="ECO:0000250"/>
    <property type="project" value="UniProtKB"/>
</dbReference>
<dbReference type="GO" id="GO:0002020">
    <property type="term" value="F:protease binding"/>
    <property type="evidence" value="ECO:0000250"/>
    <property type="project" value="UniProtKB"/>
</dbReference>
<dbReference type="GO" id="GO:0051087">
    <property type="term" value="F:protein-folding chaperone binding"/>
    <property type="evidence" value="ECO:0000250"/>
    <property type="project" value="UniProtKB"/>
</dbReference>
<dbReference type="GO" id="GO:0007596">
    <property type="term" value="P:blood coagulation"/>
    <property type="evidence" value="ECO:0000250"/>
    <property type="project" value="UniProtKB"/>
</dbReference>
<dbReference type="GO" id="GO:0007155">
    <property type="term" value="P:cell adhesion"/>
    <property type="evidence" value="ECO:0000250"/>
    <property type="project" value="UniProtKB"/>
</dbReference>
<dbReference type="GO" id="GO:0031589">
    <property type="term" value="P:cell-substrate adhesion"/>
    <property type="evidence" value="ECO:0000250"/>
    <property type="project" value="UniProtKB"/>
</dbReference>
<dbReference type="GO" id="GO:0007599">
    <property type="term" value="P:hemostasis"/>
    <property type="evidence" value="ECO:0000250"/>
    <property type="project" value="UniProtKB"/>
</dbReference>
<dbReference type="GO" id="GO:0030168">
    <property type="term" value="P:platelet activation"/>
    <property type="evidence" value="ECO:0000250"/>
    <property type="project" value="UniProtKB"/>
</dbReference>
<dbReference type="CDD" id="cd19941">
    <property type="entry name" value="TIL"/>
    <property type="match status" value="5"/>
</dbReference>
<dbReference type="CDD" id="cd01450">
    <property type="entry name" value="vWFA_subfamily_ECM"/>
    <property type="match status" value="3"/>
</dbReference>
<dbReference type="FunFam" id="2.10.25.10:FF:000674">
    <property type="entry name" value="Mucin-2"/>
    <property type="match status" value="1"/>
</dbReference>
<dbReference type="FunFam" id="2.10.25.10:FF:000284">
    <property type="entry name" value="von Willebrand factor"/>
    <property type="match status" value="1"/>
</dbReference>
<dbReference type="FunFam" id="2.10.25.10:FF:000414">
    <property type="entry name" value="von Willebrand factor"/>
    <property type="match status" value="1"/>
</dbReference>
<dbReference type="FunFam" id="2.10.25.10:FF:000444">
    <property type="entry name" value="von Willebrand factor"/>
    <property type="match status" value="1"/>
</dbReference>
<dbReference type="FunFam" id="2.10.25.10:FF:000493">
    <property type="entry name" value="von Willebrand factor"/>
    <property type="match status" value="1"/>
</dbReference>
<dbReference type="FunFam" id="3.40.50.410:FF:000053">
    <property type="entry name" value="von Willebrand factor"/>
    <property type="match status" value="1"/>
</dbReference>
<dbReference type="FunFam" id="3.40.50.410:FF:000061">
    <property type="entry name" value="von Willebrand factor"/>
    <property type="match status" value="1"/>
</dbReference>
<dbReference type="Gene3D" id="2.10.25.10">
    <property type="entry name" value="Laminin"/>
    <property type="match status" value="5"/>
</dbReference>
<dbReference type="Gene3D" id="3.40.50.410">
    <property type="entry name" value="von Willebrand factor, type A domain"/>
    <property type="match status" value="3"/>
</dbReference>
<dbReference type="InterPro" id="IPR006207">
    <property type="entry name" value="Cys_knot_C"/>
</dbReference>
<dbReference type="InterPro" id="IPR050780">
    <property type="entry name" value="Mucin_vWF_Thrombospondin_sf"/>
</dbReference>
<dbReference type="InterPro" id="IPR036084">
    <property type="entry name" value="Ser_inhib-like_sf"/>
</dbReference>
<dbReference type="InterPro" id="IPR002919">
    <property type="entry name" value="TIL_dom"/>
</dbReference>
<dbReference type="InterPro" id="IPR037578">
    <property type="entry name" value="Von_Willebrand_factor"/>
</dbReference>
<dbReference type="InterPro" id="IPR032361">
    <property type="entry name" value="VWA_N2"/>
</dbReference>
<dbReference type="InterPro" id="IPR014853">
    <property type="entry name" value="VWF/SSPO/ZAN-like_Cys-rich_dom"/>
</dbReference>
<dbReference type="InterPro" id="IPR002035">
    <property type="entry name" value="VWF_A"/>
</dbReference>
<dbReference type="InterPro" id="IPR001007">
    <property type="entry name" value="VWF_dom"/>
</dbReference>
<dbReference type="InterPro" id="IPR001846">
    <property type="entry name" value="VWF_type-D"/>
</dbReference>
<dbReference type="InterPro" id="IPR036465">
    <property type="entry name" value="vWFA_dom_sf"/>
</dbReference>
<dbReference type="PANTHER" id="PTHR11339">
    <property type="entry name" value="EXTRACELLULAR MATRIX GLYCOPROTEIN RELATED"/>
    <property type="match status" value="1"/>
</dbReference>
<dbReference type="PANTHER" id="PTHR11339:SF361">
    <property type="entry name" value="VON WILLEBRAND FACTOR"/>
    <property type="match status" value="1"/>
</dbReference>
<dbReference type="Pfam" id="PF08742">
    <property type="entry name" value="C8"/>
    <property type="match status" value="4"/>
</dbReference>
<dbReference type="Pfam" id="PF01826">
    <property type="entry name" value="TIL"/>
    <property type="match status" value="4"/>
</dbReference>
<dbReference type="Pfam" id="PF00092">
    <property type="entry name" value="VWA"/>
    <property type="match status" value="3"/>
</dbReference>
<dbReference type="Pfam" id="PF16164">
    <property type="entry name" value="VWA_N2"/>
    <property type="match status" value="1"/>
</dbReference>
<dbReference type="Pfam" id="PF00093">
    <property type="entry name" value="VWC"/>
    <property type="match status" value="2"/>
</dbReference>
<dbReference type="Pfam" id="PF00094">
    <property type="entry name" value="VWD"/>
    <property type="match status" value="4"/>
</dbReference>
<dbReference type="Pfam" id="PF23244">
    <property type="entry name" value="VWF"/>
    <property type="match status" value="1"/>
</dbReference>
<dbReference type="PIRSF" id="PIRSF002495">
    <property type="entry name" value="VWF"/>
    <property type="match status" value="1"/>
</dbReference>
<dbReference type="PRINTS" id="PR00453">
    <property type="entry name" value="VWFADOMAIN"/>
</dbReference>
<dbReference type="SMART" id="SM00832">
    <property type="entry name" value="C8"/>
    <property type="match status" value="4"/>
</dbReference>
<dbReference type="SMART" id="SM00041">
    <property type="entry name" value="CT"/>
    <property type="match status" value="1"/>
</dbReference>
<dbReference type="SMART" id="SM00327">
    <property type="entry name" value="VWA"/>
    <property type="match status" value="3"/>
</dbReference>
<dbReference type="SMART" id="SM00214">
    <property type="entry name" value="VWC"/>
    <property type="match status" value="5"/>
</dbReference>
<dbReference type="SMART" id="SM00215">
    <property type="entry name" value="VWC_out"/>
    <property type="match status" value="2"/>
</dbReference>
<dbReference type="SMART" id="SM00216">
    <property type="entry name" value="VWD"/>
    <property type="match status" value="4"/>
</dbReference>
<dbReference type="SUPFAM" id="SSF57603">
    <property type="entry name" value="FnI-like domain"/>
    <property type="match status" value="1"/>
</dbReference>
<dbReference type="SUPFAM" id="SSF57567">
    <property type="entry name" value="Serine protease inhibitors"/>
    <property type="match status" value="5"/>
</dbReference>
<dbReference type="SUPFAM" id="SSF53300">
    <property type="entry name" value="vWA-like"/>
    <property type="match status" value="3"/>
</dbReference>
<dbReference type="PROSITE" id="PS01185">
    <property type="entry name" value="CTCK_1"/>
    <property type="match status" value="1"/>
</dbReference>
<dbReference type="PROSITE" id="PS01225">
    <property type="entry name" value="CTCK_2"/>
    <property type="match status" value="1"/>
</dbReference>
<dbReference type="PROSITE" id="PS50234">
    <property type="entry name" value="VWFA"/>
    <property type="match status" value="3"/>
</dbReference>
<dbReference type="PROSITE" id="PS01208">
    <property type="entry name" value="VWFC_1"/>
    <property type="match status" value="3"/>
</dbReference>
<dbReference type="PROSITE" id="PS50184">
    <property type="entry name" value="VWFC_2"/>
    <property type="match status" value="3"/>
</dbReference>
<dbReference type="PROSITE" id="PS51233">
    <property type="entry name" value="VWFD"/>
    <property type="match status" value="4"/>
</dbReference>
<reference key="1">
    <citation type="submission" date="1996-08" db="EMBL/GenBank/DDBJ databases">
        <title>Canine vWF cDNA sequence.</title>
        <authorList>
            <person name="Stoy S.J."/>
            <person name="Shibuya H."/>
            <person name="Nonneman D.J."/>
            <person name="Holzhauer J."/>
            <person name="Mohammed I.H."/>
            <person name="Johnson G.S."/>
        </authorList>
    </citation>
    <scope>NUCLEOTIDE SEQUENCE [MRNA]</scope>
</reference>
<reference key="2">
    <citation type="journal article" date="2000" name="Blood">
        <title>von Willebrand factor storage and multimerization: 2 independent intracellular processes.</title>
        <authorList>
            <person name="Haberichter S.L."/>
            <person name="Fahs S.A."/>
            <person name="Montgomery R.R."/>
        </authorList>
    </citation>
    <scope>NUCLEOTIDE SEQUENCE [MRNA]</scope>
    <scope>SUBUNIT</scope>
    <scope>SUBCELLULAR LOCATION</scope>
    <source>
        <tissue>Heart</tissue>
    </source>
</reference>
<reference key="3">
    <citation type="submission" date="2004-01" db="EMBL/GenBank/DDBJ databases">
        <authorList>
            <person name="Montgomery R.R."/>
            <person name="Fahs S."/>
            <person name="Montgomery M.W."/>
        </authorList>
    </citation>
    <scope>SEQUENCE REVISION TO 55</scope>
</reference>
<reference key="4">
    <citation type="journal article" date="2000" name="J. Vet. Intern. Med.">
        <title>Mutation causing von Willebrand's disease in Scottish Terriers.</title>
        <authorList>
            <person name="Venta P.J."/>
            <person name="Li J."/>
            <person name="Yuzbasiyan-Gurkan V."/>
            <person name="Brewer G.J."/>
            <person name="Schall W.D."/>
        </authorList>
    </citation>
    <scope>NUCLEOTIDE SEQUENCE [MRNA]</scope>
    <scope>DISEASE</scope>
    <source>
        <strain>Scottish terrier</strain>
        <tissue>Uterus</tissue>
    </source>
</reference>
<reference key="5">
    <citation type="submission" date="1994-01" db="EMBL/GenBank/DDBJ databases">
        <title>The canine von Willebrand factor gene: sequence and expression of a region encoding the glycoprotein Ib/IX binding domain.</title>
        <authorList>
            <person name="Mancuso D.J."/>
            <person name="Christopherson P.A."/>
            <person name="Kroner P.A."/>
            <person name="Montgomery R.R."/>
        </authorList>
    </citation>
    <scope>NUCLEOTIDE SEQUENCE [GENOMIC DNA] OF 1234-1669</scope>
    <source>
        <tissue>Blood</tissue>
    </source>
</reference>
<reference key="6">
    <citation type="journal article" date="2003" name="J. Thromb. Haemost.">
        <title>von Willebrand factor, platelets and endothelial cell interactions.</title>
        <authorList>
            <person name="Ruggeri Z.M."/>
        </authorList>
    </citation>
    <scope>REVIEW</scope>
</reference>
<gene>
    <name type="primary">VWF</name>
    <name type="synonym">F8VWF</name>
</gene>
<evidence type="ECO:0000250" key="1"/>
<evidence type="ECO:0000255" key="2"/>
<evidence type="ECO:0000255" key="3">
    <source>
        <dbReference type="PROSITE-ProRule" id="PRU00039"/>
    </source>
</evidence>
<evidence type="ECO:0000255" key="4">
    <source>
        <dbReference type="PROSITE-ProRule" id="PRU00219"/>
    </source>
</evidence>
<evidence type="ECO:0000255" key="5">
    <source>
        <dbReference type="PROSITE-ProRule" id="PRU00220"/>
    </source>
</evidence>
<evidence type="ECO:0000255" key="6">
    <source>
        <dbReference type="PROSITE-ProRule" id="PRU00580"/>
    </source>
</evidence>
<evidence type="ECO:0000269" key="7">
    <source>
    </source>
</evidence>
<evidence type="ECO:0000269" key="8">
    <source>
    </source>
</evidence>
<evidence type="ECO:0000305" key="9"/>
<feature type="signal peptide" evidence="1">
    <location>
        <begin position="1"/>
        <end position="22"/>
    </location>
</feature>
<feature type="propeptide" id="PRO_0000022680" evidence="1">
    <location>
        <begin position="23"/>
        <end position="763"/>
    </location>
</feature>
<feature type="chain" id="PRO_0000022681" description="von Willebrand factor">
    <location>
        <begin position="764"/>
        <end position="2813"/>
    </location>
</feature>
<feature type="domain" description="VWFD 1" evidence="6">
    <location>
        <begin position="33"/>
        <end position="201"/>
    </location>
</feature>
<feature type="domain" description="TIL 1">
    <location>
        <begin position="295"/>
        <end position="348"/>
    </location>
</feature>
<feature type="domain" description="VWFD 2" evidence="6">
    <location>
        <begin position="386"/>
        <end position="560"/>
    </location>
</feature>
<feature type="domain" description="TIL 2">
    <location>
        <begin position="652"/>
        <end position="707"/>
    </location>
</feature>
<feature type="domain" description="TIL 3">
    <location>
        <begin position="776"/>
        <end position="827"/>
    </location>
</feature>
<feature type="domain" description="VWFD 3" evidence="6">
    <location>
        <begin position="865"/>
        <end position="1032"/>
    </location>
</feature>
<feature type="domain" description="TIL 4">
    <location>
        <begin position="1146"/>
        <end position="1196"/>
    </location>
</feature>
<feature type="domain" description="VWFA 1" evidence="4">
    <location>
        <begin position="1277"/>
        <end position="1453"/>
    </location>
</feature>
<feature type="domain" description="VWFA 2" evidence="4">
    <location>
        <begin position="1498"/>
        <end position="1665"/>
    </location>
</feature>
<feature type="domain" description="VWFA 3" evidence="4">
    <location>
        <begin position="1691"/>
        <end position="1871"/>
    </location>
</feature>
<feature type="domain" description="VWFD 4" evidence="6">
    <location>
        <begin position="1948"/>
        <end position="2124"/>
    </location>
</feature>
<feature type="domain" description="VWFC 1" evidence="5">
    <location>
        <begin position="2255"/>
        <end position="2328"/>
    </location>
</feature>
<feature type="domain" description="VWFC 2" evidence="5">
    <location>
        <begin position="2429"/>
        <end position="2495"/>
    </location>
</feature>
<feature type="domain" description="VWFC 3" evidence="5">
    <location>
        <begin position="2580"/>
        <end position="2645"/>
    </location>
</feature>
<feature type="domain" description="CTCK" evidence="3">
    <location>
        <begin position="2724"/>
        <end position="2812"/>
    </location>
</feature>
<feature type="region of interest" description="Amino-terminal">
    <location>
        <begin position="764"/>
        <end position="787"/>
    </location>
</feature>
<feature type="region of interest" description="E1">
    <location>
        <begin position="788"/>
        <end position="833"/>
    </location>
</feature>
<feature type="region of interest" description="CX">
    <location>
        <begin position="826"/>
        <end position="853"/>
    </location>
</feature>
<feature type="region of interest" description="E2">
    <location>
        <begin position="2216"/>
        <end position="2261"/>
    </location>
</feature>
<feature type="short sequence motif" description="Cell attachment site" evidence="2">
    <location>
        <begin position="531"/>
        <end position="533"/>
    </location>
</feature>
<feature type="short sequence motif" description="Cell attachment site" evidence="2">
    <location>
        <begin position="698"/>
        <end position="700"/>
    </location>
</feature>
<feature type="short sequence motif" description="Cell attachment site" evidence="2">
    <location>
        <begin position="2507"/>
        <end position="2509"/>
    </location>
</feature>
<feature type="glycosylation site" description="N-linked (GlcNAc...) asparagine" evidence="2">
    <location>
        <position position="99"/>
    </location>
</feature>
<feature type="glycosylation site" description="N-linked (GlcNAc...) asparagine" evidence="2">
    <location>
        <position position="156"/>
    </location>
</feature>
<feature type="glycosylation site" description="N-linked (GlcNAc...) asparagine" evidence="2">
    <location>
        <position position="211"/>
    </location>
</feature>
<feature type="glycosylation site" description="N-linked (GlcNAc...) asparagine" evidence="2">
    <location>
        <position position="666"/>
    </location>
</feature>
<feature type="glycosylation site" description="N-linked (GlcNAc...) asparagine" evidence="2">
    <location>
        <position position="857"/>
    </location>
</feature>
<feature type="glycosylation site" description="N-linked (GlcNAc...) asparagine" evidence="2">
    <location>
        <position position="1231"/>
    </location>
</feature>
<feature type="glycosylation site" description="N-linked (GlcNAc...) asparagine" evidence="2">
    <location>
        <position position="1515"/>
    </location>
</feature>
<feature type="glycosylation site" description="N-linked (GlcNAc...) asparagine" evidence="2">
    <location>
        <position position="1574"/>
    </location>
</feature>
<feature type="glycosylation site" description="N-linked (GlcNAc...) asparagine" evidence="2">
    <location>
        <position position="2223"/>
    </location>
</feature>
<feature type="glycosylation site" description="N-linked (GlcNAc...) asparagine" evidence="2">
    <location>
        <position position="2290"/>
    </location>
</feature>
<feature type="glycosylation site" description="N-linked (GlcNAc...) asparagine" evidence="2">
    <location>
        <position position="2357"/>
    </location>
</feature>
<feature type="glycosylation site" description="N-linked (GlcNAc...) asparagine" evidence="2">
    <location>
        <position position="2400"/>
    </location>
</feature>
<feature type="glycosylation site" description="N-linked (GlcNAc...) asparagine" evidence="2">
    <location>
        <position position="2546"/>
    </location>
</feature>
<feature type="glycosylation site" description="N-linked (GlcNAc...) asparagine" evidence="2">
    <location>
        <position position="2585"/>
    </location>
</feature>
<feature type="glycosylation site" description="N-linked (GlcNAc...) asparagine" evidence="2">
    <location>
        <position position="2790"/>
    </location>
</feature>
<feature type="disulfide bond" evidence="6">
    <location>
        <begin position="35"/>
        <end position="162"/>
    </location>
</feature>
<feature type="disulfide bond" evidence="6">
    <location>
        <begin position="57"/>
        <end position="200"/>
    </location>
</feature>
<feature type="disulfide bond" evidence="6">
    <location>
        <begin position="388"/>
        <end position="524"/>
    </location>
</feature>
<feature type="disulfide bond" evidence="6">
    <location>
        <begin position="410"/>
        <end position="559"/>
    </location>
</feature>
<feature type="disulfide bond" evidence="6">
    <location>
        <begin position="432"/>
        <end position="440"/>
    </location>
</feature>
<feature type="disulfide bond" evidence="1">
    <location>
        <begin position="767"/>
        <end position="808"/>
    </location>
</feature>
<feature type="disulfide bond" evidence="1">
    <location>
        <begin position="776"/>
        <end position="804"/>
    </location>
</feature>
<feature type="disulfide bond" evidence="1">
    <location>
        <begin position="810"/>
        <end position="821"/>
    </location>
</feature>
<feature type="disulfide bond" evidence="6">
    <location>
        <begin position="867"/>
        <end position="996"/>
    </location>
</feature>
<feature type="disulfide bond" evidence="6">
    <location>
        <begin position="889"/>
        <end position="1031"/>
    </location>
</feature>
<feature type="disulfide bond" evidence="6">
    <location>
        <begin position="898"/>
        <end position="993"/>
    </location>
</feature>
<feature type="disulfide bond" evidence="6">
    <location>
        <begin position="914"/>
        <end position="921"/>
    </location>
</feature>
<feature type="disulfide bond" evidence="1">
    <location>
        <begin position="1060"/>
        <end position="1084"/>
    </location>
</feature>
<feature type="disulfide bond" evidence="1">
    <location>
        <begin position="1071"/>
        <end position="1111"/>
    </location>
</feature>
<feature type="disulfide bond" evidence="1">
    <location>
        <begin position="1089"/>
        <end position="1091"/>
    </location>
</feature>
<feature type="disulfide bond" evidence="1">
    <location>
        <begin position="1126"/>
        <end position="1130"/>
    </location>
</feature>
<feature type="disulfide bond" evidence="1">
    <location>
        <begin position="1149"/>
        <end position="1169"/>
    </location>
</feature>
<feature type="disulfide bond" evidence="1">
    <location>
        <begin position="1153"/>
        <end position="1165"/>
    </location>
</feature>
<feature type="disulfide bond" evidence="1">
    <location>
        <begin position="1196"/>
        <end position="1199"/>
    </location>
</feature>
<feature type="disulfide bond" evidence="1">
    <location>
        <begin position="1234"/>
        <end position="1237"/>
    </location>
</feature>
<feature type="disulfide bond" evidence="1">
    <location>
        <begin position="1272"/>
        <end position="1458"/>
    </location>
</feature>
<feature type="disulfide bond" evidence="1">
    <location>
        <begin position="1669"/>
        <end position="1670"/>
    </location>
</feature>
<feature type="disulfide bond" evidence="1">
    <location>
        <begin position="1686"/>
        <end position="1872"/>
    </location>
</feature>
<feature type="disulfide bond" evidence="1">
    <location>
        <begin position="1879"/>
        <end position="1904"/>
    </location>
</feature>
<feature type="disulfide bond" description="Or C-1899 with C-1942" evidence="3 6">
    <location>
        <begin position="1899"/>
        <end position="1940"/>
    </location>
</feature>
<feature type="disulfide bond" evidence="1">
    <location>
        <begin position="1927"/>
        <end position="2088"/>
    </location>
</feature>
<feature type="disulfide bond" evidence="6">
    <location>
        <begin position="1950"/>
        <end position="2085"/>
    </location>
</feature>
<feature type="disulfide bond" evidence="6">
    <location>
        <begin position="1972"/>
        <end position="2123"/>
    </location>
</feature>
<feature type="disulfide bond" evidence="6">
    <location>
        <begin position="1993"/>
        <end position="2001"/>
    </location>
</feature>
<feature type="disulfide bond" evidence="1">
    <location>
        <begin position="2724"/>
        <end position="2774"/>
    </location>
</feature>
<feature type="disulfide bond" evidence="1">
    <location>
        <begin position="2739"/>
        <end position="2788"/>
    </location>
</feature>
<feature type="disulfide bond" evidence="1">
    <location>
        <begin position="2750"/>
        <end position="2804"/>
    </location>
</feature>
<feature type="disulfide bond" evidence="1">
    <location>
        <begin position="2754"/>
        <end position="2806"/>
    </location>
</feature>
<feature type="disulfide bond" evidence="1">
    <location>
        <begin status="unknown"/>
        <end position="2811"/>
    </location>
</feature>
<feature type="sequence conflict" description="In Ref. 4; AAD04919." evidence="9" ref="4">
    <original>V</original>
    <variation>I</variation>
    <location>
        <position position="70"/>
    </location>
</feature>
<feature type="sequence conflict" description="In Ref. 2; AAB93766." evidence="9" ref="2">
    <original>A</original>
    <variation>G</variation>
    <location>
        <position position="266"/>
    </location>
</feature>
<feature type="sequence conflict" description="In Ref. 2; AAB93766." evidence="9" ref="2">
    <original>I</original>
    <variation>V</variation>
    <location>
        <position position="280"/>
    </location>
</feature>
<feature type="sequence conflict" description="In Ref. 2; AAB93766." evidence="9" ref="2">
    <original>VCH</original>
    <variation>ICQ</variation>
    <location>
        <begin position="409"/>
        <end position="411"/>
    </location>
</feature>
<feature type="sequence conflict" description="In Ref. 1; AAB05549." evidence="9" ref="1">
    <original>G</original>
    <variation>A</variation>
    <location>
        <position position="994"/>
    </location>
</feature>
<feature type="sequence conflict" description="In Ref. 2; AAB93766." evidence="9" ref="2">
    <original>F</original>
    <variation>L</variation>
    <location>
        <position position="1021"/>
    </location>
</feature>
<feature type="sequence conflict" description="In Ref. 2; AAB93766." evidence="9" ref="2">
    <original>L</original>
    <variation>P</variation>
    <location>
        <position position="2381"/>
    </location>
</feature>
<feature type="sequence conflict" description="In Ref. 2; AAB93766." evidence="9" ref="2">
    <original>P</original>
    <variation>L</variation>
    <location>
        <position position="2406"/>
    </location>
</feature>
<organism>
    <name type="scientific">Canis lupus familiaris</name>
    <name type="common">Dog</name>
    <name type="synonym">Canis familiaris</name>
    <dbReference type="NCBI Taxonomy" id="9615"/>
    <lineage>
        <taxon>Eukaryota</taxon>
        <taxon>Metazoa</taxon>
        <taxon>Chordata</taxon>
        <taxon>Craniata</taxon>
        <taxon>Vertebrata</taxon>
        <taxon>Euteleostomi</taxon>
        <taxon>Mammalia</taxon>
        <taxon>Eutheria</taxon>
        <taxon>Laurasiatheria</taxon>
        <taxon>Carnivora</taxon>
        <taxon>Caniformia</taxon>
        <taxon>Canidae</taxon>
        <taxon>Canis</taxon>
    </lineage>
</organism>
<keyword id="KW-0094">Blood coagulation</keyword>
<keyword id="KW-0130">Cell adhesion</keyword>
<keyword id="KW-0165">Cleavage on pair of basic residues</keyword>
<keyword id="KW-1015">Disulfide bond</keyword>
<keyword id="KW-0272">Extracellular matrix</keyword>
<keyword id="KW-0325">Glycoprotein</keyword>
<keyword id="KW-0356">Hemostasis</keyword>
<keyword id="KW-1185">Reference proteome</keyword>
<keyword id="KW-0677">Repeat</keyword>
<keyword id="KW-0964">Secreted</keyword>
<keyword id="KW-0732">Signal</keyword>
<protein>
    <recommendedName>
        <fullName>von Willebrand factor</fullName>
        <shortName>vWF</shortName>
    </recommendedName>
</protein>
<sequence length="2813" mass="309719">MSPTRLVRVLLALALILPGKLCTKGTVGRSSMARCSLFGGDFINTFDESMYSFAGDCSYLLAGDCQEHSVSLIGGFQNGKRVSLSVYLGEFFDIHLFVNGTMLQGTQSISMPYASNGLYLEAEAGYYKLSSEAYGFVARIDGNGNFQVLLSDRYFNKTCGLCGNFNIFAEDDFRTQEGTLTSDPYDFANSWALSSGEQRCKRVSPPSSPCNVSSDEVQQVLWEQCQLLKSASVFARCHPLVDPEPFVALCERTLCTCVQGMECPCAVLLEYARACAQQGIVLYGWTDHSVCRPACPAGMEYKECVSPCTRTCQSLHVKEVCQEQCVDGCSCPEGQLLDEGHCVGSAECSCVHAGQRYPPGASLLQDCHTCICRNSLWICSNEECPGECLVTGQSHFKSFDNRYFTFSGVCHYLLAQDCQDHTFSVVIETVQCADDLDAVCTRSVTVRLPGHHNSLVKLKHGGGVSMDGQDIQIPLLQGDLRIQHTVMASVRLSYGEDLQMDWDGRGRLLVTLSPAYAGKTCGLCGNYNGNRGDDFVTPAGLAEPLVEDFGNAWKLLGACENLQKQHRDPCSLNPRQARFAEEACALLTSSKFEPCHRAVGPQPYVQNCRYDVCSCSDGRDCLCSAVANYAAACARRGVHIAWREPGFCALSCPQGQVYLQCGTPCNMTCRSLSYPEEDCNEVCLEGCFCPPGLYLDERGDCVPKAQCPCYYDGEIFQPEDIFSDHHTMCYCEDGFMHCTTSGGLGSLLPNPVLSSPRSHRSKRSLSCRPPMVKLVCPADNPRAEGLECAKTCQNYDLQCMSTGCVSGCLCPQGMVRHENRCVALERCPCFHQGQEYAPGETVKIDCNTCVCRDRKWNCTDHVCDATCSAIGMAHYLTFDGLKYLFPGECQYVLVQDYCGSNPGTFRILVGNEGCSYPSVKCKKRVTILVEGGEIELFDGEVNVKKPMKDETHFEVVESGQYVILLLGKALSVVWDHRLSISVTLKRTYQEQVCGLCGNFDGIQNNDFTSSSLQIEEDPVDFGNSWKVNPQCADTKKVPLDSSPAVCHNNIMKQTMVDSSCRILTSDIFQDCNRLVDPEPFLDICIYDTCSCESIGDCTCFCDTIAAYAHVCAQHGKVVAWRTATFCPQNCEERNLHENGYECEWRYNSCAPACPITCQHPEPLACPVQCVEGCHAHCPPGKILDELLQTCIDPEDCPVCEVAGRRLAPGKKIILNPSDPEHCQICHCDGVNFTCQACREPGSLVVPPTEGPIGSTTSYVEDTPEPPLHDFHCSRLLDLVFLLDGSSKLSEDEFEVLKVFVVGMMEHLHISQKRIRVAVVEYHDGSHAYIELKDRKRPSELRRITSQVKYAGSEVASTSEVLKYTLFQIFGKIDRPEASRIALLLMASQEPSRLARNLVRYVQGLKKKKVIVIPVGIGPHASLKQIHLIEKQAPENKAFVFSGVDELEQRRDEIINYLCDLAPEAPAPTQHPPMAQVTVGSELLGVSSPGPKRNSMVLDVVFVLEGSDKIGEANFNKSREFMEEVIQRMDVGQDRIHVTVLQYSYMVTVEYTFSEAQSKGEVLQQVRDIRYRGGNRTNTGLALQYLSEHSFSVSQGDREQVPNLVYMVTGNPASDEIKRMPGDIQVVPIGVGPHANVQELEKIGWPNAPILIHDFEMLPREAPDLVLQRCCSGEGLQIPTLSPTPDCSQPLDVVLLLDGSSSIPASYFDEMKSFTKAFISRANIGPRLTQVSVLQYGSITTIDVPWNVAYEKVHLLSLVDLMQQEGGPSQIGDALSFAVRYVTSEVHGARPGASKAVVILVTDVSVDSVDAAAEAARSNRVTVFPIGIGDRYSEAQLSSLAGPKAGSNMVRLQRIEDLPTVATLGNSFFHKLCSGFDRVCVDEDGNEKRPGDVWTLPDQCHTVTCLPDGQTLLKSHRVNCDRGPRPSCPNGQPPLRVEETCGCRWTCPCVCMGSSTRHIVTFDGQNFKLTGSCSYVLFQNKEQDLEVILHNGACSPGAKETCMKSIEVKHDGLSVELHSDMQMTVNGRLVSIPYVGGDMEVNVYGTIMYEVRFNHLGHIFTFTPQNNEFQLQLSPRTFASKTYGLCGICDENGANDFILRDGTVTTDWKALIQEWTVQQLGKTCQPVPEEQCPVSSSSHCQVLLSELFAECHKVLAPATFYAMCQPDSCHPKKVCEAIALYAHLCRTKGVCVDWRRANFCAMSCPPSLVYNHCEHGCPRLCEGNTSSCGDQPSEGCFCPPNQVMLEGSCVPEEACTQCISEDGVRHQFLETWVPAHQPCQICTCLSGRKVNCTLQPCPTARAPTCGPCEVARLRQNAEQCCPEYECVCDLVSCDLPPVPPCEDGLQMTLTNPGECRPNFTCACRKDECRRESPPSCPPHRTLALRKTQCCDEYECACNCVNSTVSCPLGYLASAVTNDCGCTTTTCFPDKVCVHRGTIYPVGQFWEEACDVCTCTDLEDSVMGLRVAQCSQKPCEDNCLSGFTYVLHEGECCGRCLPSACEVVIGSPRGDAQSHWKNVGSHWASPDNPCLINECVRVKEEVFVQQRNVSCPQLNVPTCPTGFQLSCKTSECCPTCHCEPLEACLLNGTIIGPGKSLMIDVCTTCRCTVQVGVISGFKLECRKTTCEACPLGYKEEKNQGECCGRCLPIACTIQLRGGQIMTLKRDETIQDGCDSHFCKVNERGEYIWEKRVTGCPPFDEHKCLAEGGKIMKIPGTCCDTCEEPECKDIIAKLQRVKVGDCKSEEEVDIHYCEGKCASKAVYSIHMEDVQDQCSCCSPTQTEPMQVPLRCTNGSLIYHEILNAMQCRCSPRKCSK</sequence>
<name>VWF_CANLF</name>
<accession>Q28295</accession>
<accession>Q28311</accession>
<accession>Q9TSI4</accession>